<organism>
    <name type="scientific">Yersinia pestis bv. Antiqua (strain Angola)</name>
    <dbReference type="NCBI Taxonomy" id="349746"/>
    <lineage>
        <taxon>Bacteria</taxon>
        <taxon>Pseudomonadati</taxon>
        <taxon>Pseudomonadota</taxon>
        <taxon>Gammaproteobacteria</taxon>
        <taxon>Enterobacterales</taxon>
        <taxon>Yersiniaceae</taxon>
        <taxon>Yersinia</taxon>
    </lineage>
</organism>
<protein>
    <recommendedName>
        <fullName evidence="1">Argininosuccinate lyase</fullName>
        <shortName evidence="1">ASAL</shortName>
        <ecNumber evidence="1">4.3.2.1</ecNumber>
    </recommendedName>
    <alternativeName>
        <fullName evidence="1">Arginosuccinase</fullName>
    </alternativeName>
</protein>
<proteinExistence type="inferred from homology"/>
<gene>
    <name evidence="1" type="primary">argH</name>
    <name type="ordered locus">YpAngola_A3896</name>
</gene>
<keyword id="KW-0028">Amino-acid biosynthesis</keyword>
<keyword id="KW-0055">Arginine biosynthesis</keyword>
<keyword id="KW-0963">Cytoplasm</keyword>
<keyword id="KW-0456">Lyase</keyword>
<accession>A9R514</accession>
<dbReference type="EC" id="4.3.2.1" evidence="1"/>
<dbReference type="EMBL" id="CP000901">
    <property type="protein sequence ID" value="ABX86388.1"/>
    <property type="molecule type" value="Genomic_DNA"/>
</dbReference>
<dbReference type="RefSeq" id="WP_002209487.1">
    <property type="nucleotide sequence ID" value="NZ_CP009935.1"/>
</dbReference>
<dbReference type="SMR" id="A9R514"/>
<dbReference type="GeneID" id="57974777"/>
<dbReference type="KEGG" id="ypg:YpAngola_A3896"/>
<dbReference type="PATRIC" id="fig|349746.12.peg.616"/>
<dbReference type="UniPathway" id="UPA00068">
    <property type="reaction ID" value="UER00114"/>
</dbReference>
<dbReference type="GO" id="GO:0005829">
    <property type="term" value="C:cytosol"/>
    <property type="evidence" value="ECO:0007669"/>
    <property type="project" value="TreeGrafter"/>
</dbReference>
<dbReference type="GO" id="GO:0004056">
    <property type="term" value="F:argininosuccinate lyase activity"/>
    <property type="evidence" value="ECO:0007669"/>
    <property type="project" value="UniProtKB-UniRule"/>
</dbReference>
<dbReference type="GO" id="GO:0042450">
    <property type="term" value="P:arginine biosynthetic process via ornithine"/>
    <property type="evidence" value="ECO:0007669"/>
    <property type="project" value="InterPro"/>
</dbReference>
<dbReference type="GO" id="GO:0006526">
    <property type="term" value="P:L-arginine biosynthetic process"/>
    <property type="evidence" value="ECO:0007669"/>
    <property type="project" value="UniProtKB-UniRule"/>
</dbReference>
<dbReference type="CDD" id="cd01359">
    <property type="entry name" value="Argininosuccinate_lyase"/>
    <property type="match status" value="1"/>
</dbReference>
<dbReference type="FunFam" id="1.10.275.10:FF:000004">
    <property type="entry name" value="Argininosuccinate lyase"/>
    <property type="match status" value="1"/>
</dbReference>
<dbReference type="FunFam" id="1.10.40.30:FF:000001">
    <property type="entry name" value="Argininosuccinate lyase"/>
    <property type="match status" value="1"/>
</dbReference>
<dbReference type="FunFam" id="1.20.200.10:FF:000006">
    <property type="entry name" value="Argininosuccinate lyase"/>
    <property type="match status" value="1"/>
</dbReference>
<dbReference type="Gene3D" id="1.10.40.30">
    <property type="entry name" value="Fumarase/aspartase (C-terminal domain)"/>
    <property type="match status" value="1"/>
</dbReference>
<dbReference type="Gene3D" id="1.20.200.10">
    <property type="entry name" value="Fumarase/aspartase (Central domain)"/>
    <property type="match status" value="1"/>
</dbReference>
<dbReference type="Gene3D" id="1.10.275.10">
    <property type="entry name" value="Fumarase/aspartase (N-terminal domain)"/>
    <property type="match status" value="1"/>
</dbReference>
<dbReference type="HAMAP" id="MF_00006">
    <property type="entry name" value="Arg_succ_lyase"/>
    <property type="match status" value="1"/>
</dbReference>
<dbReference type="InterPro" id="IPR029419">
    <property type="entry name" value="Arg_succ_lyase_C"/>
</dbReference>
<dbReference type="InterPro" id="IPR009049">
    <property type="entry name" value="Argininosuccinate_lyase"/>
</dbReference>
<dbReference type="InterPro" id="IPR024083">
    <property type="entry name" value="Fumarase/histidase_N"/>
</dbReference>
<dbReference type="InterPro" id="IPR020557">
    <property type="entry name" value="Fumarate_lyase_CS"/>
</dbReference>
<dbReference type="InterPro" id="IPR000362">
    <property type="entry name" value="Fumarate_lyase_fam"/>
</dbReference>
<dbReference type="InterPro" id="IPR022761">
    <property type="entry name" value="Fumarate_lyase_N"/>
</dbReference>
<dbReference type="InterPro" id="IPR008948">
    <property type="entry name" value="L-Aspartase-like"/>
</dbReference>
<dbReference type="NCBIfam" id="TIGR00838">
    <property type="entry name" value="argH"/>
    <property type="match status" value="1"/>
</dbReference>
<dbReference type="NCBIfam" id="NF008964">
    <property type="entry name" value="PRK12308.1"/>
    <property type="match status" value="1"/>
</dbReference>
<dbReference type="PANTHER" id="PTHR43814">
    <property type="entry name" value="ARGININOSUCCINATE LYASE"/>
    <property type="match status" value="1"/>
</dbReference>
<dbReference type="PANTHER" id="PTHR43814:SF1">
    <property type="entry name" value="ARGININOSUCCINATE LYASE"/>
    <property type="match status" value="1"/>
</dbReference>
<dbReference type="Pfam" id="PF14698">
    <property type="entry name" value="ASL_C2"/>
    <property type="match status" value="1"/>
</dbReference>
<dbReference type="Pfam" id="PF00206">
    <property type="entry name" value="Lyase_1"/>
    <property type="match status" value="1"/>
</dbReference>
<dbReference type="PRINTS" id="PR00145">
    <property type="entry name" value="ARGSUCLYASE"/>
</dbReference>
<dbReference type="PRINTS" id="PR00149">
    <property type="entry name" value="FUMRATELYASE"/>
</dbReference>
<dbReference type="SUPFAM" id="SSF48557">
    <property type="entry name" value="L-aspartase-like"/>
    <property type="match status" value="1"/>
</dbReference>
<dbReference type="PROSITE" id="PS00163">
    <property type="entry name" value="FUMARATE_LYASES"/>
    <property type="match status" value="1"/>
</dbReference>
<name>ARLY_YERPG</name>
<evidence type="ECO:0000255" key="1">
    <source>
        <dbReference type="HAMAP-Rule" id="MF_00006"/>
    </source>
</evidence>
<sequence>MALWGGRFSQAADQRFKQFNDSLRFDYRLAEQDIIGSVAWSKALVTVGVLNADEQQQLEQALSVLLEEVQANPHAILASDAEDIHSWVETKLIDKVGDLGKKLHTGRSRNDQVATDLKLWCKFQITELQTAVQQLQQALVMTAEANQDAVMPGYTHLQRAQPVTFAHWCLAYVEMLSRDESRLQDTLKRLDVSPLGCGALAGTAYAIDREQLAGWLGFASATRNSLDSVSDRDHVLELLSDASIGMVHLSRFAEDLIFFNSGEAAFVDLSDRVTSGSSLMPQKKNPDALELIRGKCGRVQGALTGMTMTLKGLPLAYNKDMQEDKEGLFDALDTWLDCLHMAALVLDGIQVKRPRCKEAAEQGYANATELADYLVAKGVPFREAHHIVGEAVVEAIRQGKALEALALSDLQQFSSVIGDDVYPILALQSCLDKRVAKGGVSPQQVASAIAEAKARLF</sequence>
<comment type="catalytic activity">
    <reaction evidence="1">
        <text>2-(N(omega)-L-arginino)succinate = fumarate + L-arginine</text>
        <dbReference type="Rhea" id="RHEA:24020"/>
        <dbReference type="ChEBI" id="CHEBI:29806"/>
        <dbReference type="ChEBI" id="CHEBI:32682"/>
        <dbReference type="ChEBI" id="CHEBI:57472"/>
        <dbReference type="EC" id="4.3.2.1"/>
    </reaction>
</comment>
<comment type="pathway">
    <text evidence="1">Amino-acid biosynthesis; L-arginine biosynthesis; L-arginine from L-ornithine and carbamoyl phosphate: step 3/3.</text>
</comment>
<comment type="subcellular location">
    <subcellularLocation>
        <location evidence="1">Cytoplasm</location>
    </subcellularLocation>
</comment>
<comment type="similarity">
    <text evidence="1">Belongs to the lyase 1 family. Argininosuccinate lyase subfamily.</text>
</comment>
<feature type="chain" id="PRO_1000089134" description="Argininosuccinate lyase">
    <location>
        <begin position="1"/>
        <end position="457"/>
    </location>
</feature>
<reference key="1">
    <citation type="journal article" date="2010" name="J. Bacteriol.">
        <title>Genome sequence of the deep-rooted Yersinia pestis strain Angola reveals new insights into the evolution and pangenome of the plague bacterium.</title>
        <authorList>
            <person name="Eppinger M."/>
            <person name="Worsham P.L."/>
            <person name="Nikolich M.P."/>
            <person name="Riley D.R."/>
            <person name="Sebastian Y."/>
            <person name="Mou S."/>
            <person name="Achtman M."/>
            <person name="Lindler L.E."/>
            <person name="Ravel J."/>
        </authorList>
    </citation>
    <scope>NUCLEOTIDE SEQUENCE [LARGE SCALE GENOMIC DNA]</scope>
    <source>
        <strain>Angola</strain>
    </source>
</reference>